<organism>
    <name type="scientific">Shewanella oneidensis (strain ATCC 700550 / JCM 31522 / CIP 106686 / LMG 19005 / NCIMB 14063 / MR-1)</name>
    <dbReference type="NCBI Taxonomy" id="211586"/>
    <lineage>
        <taxon>Bacteria</taxon>
        <taxon>Pseudomonadati</taxon>
        <taxon>Pseudomonadota</taxon>
        <taxon>Gammaproteobacteria</taxon>
        <taxon>Alteromonadales</taxon>
        <taxon>Shewanellaceae</taxon>
        <taxon>Shewanella</taxon>
    </lineage>
</organism>
<name>PEPQ_SHEON</name>
<feature type="chain" id="PRO_0000303861" description="Xaa-Pro dipeptidase">
    <location>
        <begin position="1"/>
        <end position="439"/>
    </location>
</feature>
<feature type="binding site" evidence="1">
    <location>
        <position position="244"/>
    </location>
    <ligand>
        <name>Mn(2+)</name>
        <dbReference type="ChEBI" id="CHEBI:29035"/>
        <label>2</label>
    </ligand>
</feature>
<feature type="binding site" evidence="1">
    <location>
        <position position="255"/>
    </location>
    <ligand>
        <name>Mn(2+)</name>
        <dbReference type="ChEBI" id="CHEBI:29035"/>
        <label>1</label>
    </ligand>
</feature>
<feature type="binding site" evidence="1">
    <location>
        <position position="255"/>
    </location>
    <ligand>
        <name>Mn(2+)</name>
        <dbReference type="ChEBI" id="CHEBI:29035"/>
        <label>2</label>
    </ligand>
</feature>
<feature type="binding site" evidence="1">
    <location>
        <position position="335"/>
    </location>
    <ligand>
        <name>Mn(2+)</name>
        <dbReference type="ChEBI" id="CHEBI:29035"/>
        <label>1</label>
    </ligand>
</feature>
<feature type="binding site" evidence="1">
    <location>
        <position position="380"/>
    </location>
    <ligand>
        <name>Mn(2+)</name>
        <dbReference type="ChEBI" id="CHEBI:29035"/>
        <label>1</label>
    </ligand>
</feature>
<feature type="binding site" evidence="1">
    <location>
        <position position="419"/>
    </location>
    <ligand>
        <name>Mn(2+)</name>
        <dbReference type="ChEBI" id="CHEBI:29035"/>
        <label>1</label>
    </ligand>
</feature>
<feature type="binding site" evidence="1">
    <location>
        <position position="419"/>
    </location>
    <ligand>
        <name>Mn(2+)</name>
        <dbReference type="ChEBI" id="CHEBI:29035"/>
        <label>2</label>
    </ligand>
</feature>
<accession>Q8EKR8</accession>
<keyword id="KW-0224">Dipeptidase</keyword>
<keyword id="KW-0378">Hydrolase</keyword>
<keyword id="KW-0464">Manganese</keyword>
<keyword id="KW-0479">Metal-binding</keyword>
<keyword id="KW-0482">Metalloprotease</keyword>
<keyword id="KW-0645">Protease</keyword>
<keyword id="KW-1185">Reference proteome</keyword>
<reference key="1">
    <citation type="journal article" date="2002" name="Nat. Biotechnol.">
        <title>Genome sequence of the dissimilatory metal ion-reducing bacterium Shewanella oneidensis.</title>
        <authorList>
            <person name="Heidelberg J.F."/>
            <person name="Paulsen I.T."/>
            <person name="Nelson K.E."/>
            <person name="Gaidos E.J."/>
            <person name="Nelson W.C."/>
            <person name="Read T.D."/>
            <person name="Eisen J.A."/>
            <person name="Seshadri R."/>
            <person name="Ward N.L."/>
            <person name="Methe B.A."/>
            <person name="Clayton R.A."/>
            <person name="Meyer T."/>
            <person name="Tsapin A."/>
            <person name="Scott J."/>
            <person name="Beanan M.J."/>
            <person name="Brinkac L.M."/>
            <person name="Daugherty S.C."/>
            <person name="DeBoy R.T."/>
            <person name="Dodson R.J."/>
            <person name="Durkin A.S."/>
            <person name="Haft D.H."/>
            <person name="Kolonay J.F."/>
            <person name="Madupu R."/>
            <person name="Peterson J.D."/>
            <person name="Umayam L.A."/>
            <person name="White O."/>
            <person name="Wolf A.M."/>
            <person name="Vamathevan J.J."/>
            <person name="Weidman J.F."/>
            <person name="Impraim M."/>
            <person name="Lee K."/>
            <person name="Berry K.J."/>
            <person name="Lee C."/>
            <person name="Mueller J."/>
            <person name="Khouri H.M."/>
            <person name="Gill J."/>
            <person name="Utterback T.R."/>
            <person name="McDonald L.A."/>
            <person name="Feldblyum T.V."/>
            <person name="Smith H.O."/>
            <person name="Venter J.C."/>
            <person name="Nealson K.H."/>
            <person name="Fraser C.M."/>
        </authorList>
    </citation>
    <scope>NUCLEOTIDE SEQUENCE [LARGE SCALE GENOMIC DNA]</scope>
    <source>
        <strain>ATCC 700550 / JCM 31522 / CIP 106686 / LMG 19005 / NCIMB 14063 / MR-1</strain>
    </source>
</reference>
<dbReference type="EC" id="3.4.13.9" evidence="1"/>
<dbReference type="EMBL" id="AE014299">
    <property type="protein sequence ID" value="AAN53109.1"/>
    <property type="molecule type" value="Genomic_DNA"/>
</dbReference>
<dbReference type="RefSeq" id="NP_715664.1">
    <property type="nucleotide sequence ID" value="NC_004347.2"/>
</dbReference>
<dbReference type="RefSeq" id="WP_011070438.1">
    <property type="nucleotide sequence ID" value="NC_004347.2"/>
</dbReference>
<dbReference type="SMR" id="Q8EKR8"/>
<dbReference type="STRING" id="211586.SO_0022"/>
<dbReference type="MEROPS" id="M24.003"/>
<dbReference type="PaxDb" id="211586-SO_0022"/>
<dbReference type="KEGG" id="son:SO_0022"/>
<dbReference type="PATRIC" id="fig|211586.12.peg.22"/>
<dbReference type="eggNOG" id="COG0006">
    <property type="taxonomic scope" value="Bacteria"/>
</dbReference>
<dbReference type="HOGENOM" id="CLU_050675_0_0_6"/>
<dbReference type="OrthoDB" id="9806388at2"/>
<dbReference type="PhylomeDB" id="Q8EKR8"/>
<dbReference type="BioCyc" id="SONE211586:G1GMP-22-MONOMER"/>
<dbReference type="Proteomes" id="UP000008186">
    <property type="component" value="Chromosome"/>
</dbReference>
<dbReference type="GO" id="GO:0005829">
    <property type="term" value="C:cytosol"/>
    <property type="evidence" value="ECO:0000318"/>
    <property type="project" value="GO_Central"/>
</dbReference>
<dbReference type="GO" id="GO:0004177">
    <property type="term" value="F:aminopeptidase activity"/>
    <property type="evidence" value="ECO:0000318"/>
    <property type="project" value="GO_Central"/>
</dbReference>
<dbReference type="GO" id="GO:0046872">
    <property type="term" value="F:metal ion binding"/>
    <property type="evidence" value="ECO:0007669"/>
    <property type="project" value="UniProtKB-KW"/>
</dbReference>
<dbReference type="GO" id="GO:0008235">
    <property type="term" value="F:metalloexopeptidase activity"/>
    <property type="evidence" value="ECO:0007669"/>
    <property type="project" value="UniProtKB-UniRule"/>
</dbReference>
<dbReference type="GO" id="GO:0016795">
    <property type="term" value="F:phosphoric triester hydrolase activity"/>
    <property type="evidence" value="ECO:0007669"/>
    <property type="project" value="InterPro"/>
</dbReference>
<dbReference type="GO" id="GO:0102009">
    <property type="term" value="F:proline dipeptidase activity"/>
    <property type="evidence" value="ECO:0007669"/>
    <property type="project" value="UniProtKB-EC"/>
</dbReference>
<dbReference type="GO" id="GO:0006508">
    <property type="term" value="P:proteolysis"/>
    <property type="evidence" value="ECO:0000318"/>
    <property type="project" value="GO_Central"/>
</dbReference>
<dbReference type="CDD" id="cd01087">
    <property type="entry name" value="Prolidase"/>
    <property type="match status" value="1"/>
</dbReference>
<dbReference type="Gene3D" id="3.90.230.10">
    <property type="entry name" value="Creatinase/methionine aminopeptidase superfamily"/>
    <property type="match status" value="1"/>
</dbReference>
<dbReference type="Gene3D" id="3.40.350.10">
    <property type="entry name" value="Creatinase/prolidase N-terminal domain"/>
    <property type="match status" value="1"/>
</dbReference>
<dbReference type="HAMAP" id="MF_01279">
    <property type="entry name" value="X_Pro_dipeptid"/>
    <property type="match status" value="1"/>
</dbReference>
<dbReference type="InterPro" id="IPR029149">
    <property type="entry name" value="Creatin/AminoP/Spt16_N"/>
</dbReference>
<dbReference type="InterPro" id="IPR036005">
    <property type="entry name" value="Creatinase/aminopeptidase-like"/>
</dbReference>
<dbReference type="InterPro" id="IPR048819">
    <property type="entry name" value="PepQ_N"/>
</dbReference>
<dbReference type="InterPro" id="IPR000994">
    <property type="entry name" value="Pept_M24"/>
</dbReference>
<dbReference type="InterPro" id="IPR001131">
    <property type="entry name" value="Peptidase_M24B_aminopep-P_CS"/>
</dbReference>
<dbReference type="InterPro" id="IPR052433">
    <property type="entry name" value="X-Pro_dipept-like"/>
</dbReference>
<dbReference type="InterPro" id="IPR022846">
    <property type="entry name" value="X_Pro_dipept"/>
</dbReference>
<dbReference type="NCBIfam" id="NF010133">
    <property type="entry name" value="PRK13607.1"/>
    <property type="match status" value="1"/>
</dbReference>
<dbReference type="PANTHER" id="PTHR43226">
    <property type="entry name" value="XAA-PRO AMINOPEPTIDASE 3"/>
    <property type="match status" value="1"/>
</dbReference>
<dbReference type="PANTHER" id="PTHR43226:SF8">
    <property type="entry name" value="XAA-PRO DIPEPTIDASE"/>
    <property type="match status" value="1"/>
</dbReference>
<dbReference type="Pfam" id="PF21216">
    <property type="entry name" value="PepQ_N"/>
    <property type="match status" value="1"/>
</dbReference>
<dbReference type="Pfam" id="PF00557">
    <property type="entry name" value="Peptidase_M24"/>
    <property type="match status" value="1"/>
</dbReference>
<dbReference type="SUPFAM" id="SSF55920">
    <property type="entry name" value="Creatinase/aminopeptidase"/>
    <property type="match status" value="1"/>
</dbReference>
<dbReference type="SUPFAM" id="SSF53092">
    <property type="entry name" value="Creatinase/prolidase N-terminal domain"/>
    <property type="match status" value="1"/>
</dbReference>
<dbReference type="PROSITE" id="PS00491">
    <property type="entry name" value="PROLINE_PEPTIDASE"/>
    <property type="match status" value="1"/>
</dbReference>
<evidence type="ECO:0000255" key="1">
    <source>
        <dbReference type="HAMAP-Rule" id="MF_01279"/>
    </source>
</evidence>
<comment type="function">
    <text evidence="1">Splits dipeptides with a prolyl residue in the C-terminal position.</text>
</comment>
<comment type="catalytic activity">
    <reaction evidence="1">
        <text>Xaa-L-Pro dipeptide + H2O = an L-alpha-amino acid + L-proline</text>
        <dbReference type="Rhea" id="RHEA:76407"/>
        <dbReference type="ChEBI" id="CHEBI:15377"/>
        <dbReference type="ChEBI" id="CHEBI:59869"/>
        <dbReference type="ChEBI" id="CHEBI:60039"/>
        <dbReference type="ChEBI" id="CHEBI:195196"/>
        <dbReference type="EC" id="3.4.13.9"/>
    </reaction>
</comment>
<comment type="cofactor">
    <cofactor evidence="1">
        <name>Mn(2+)</name>
        <dbReference type="ChEBI" id="CHEBI:29035"/>
    </cofactor>
    <text evidence="1">Binds 2 manganese ions per subunit.</text>
</comment>
<comment type="similarity">
    <text evidence="1">Belongs to the peptidase M24B family. Bacterial-type prolidase subfamily.</text>
</comment>
<proteinExistence type="inferred from homology"/>
<sequence length="439" mass="49908">MDHLAHYYHAHIDELNRRVAEIVSREALSGLVIHSGQPHRMFLDDINYPFKANPHFKAWLPVLDNPNCWLVVNGRDKPQLIFYRPVDFWHKVADVPDMFWTEHFDIKLLTKADKVAELLPTDIANWAYLGEHLDVAEVLGFTSRNPDSVMSYLHFHRTTKTEYELECMRRANQIAVQGHQAAKNAFYNGASEFEIQQQYLSAVGQGENEVPYGNIIALNQNAAILHYTALEHQNPARRLSFLIDAGASYFGYASDITRTYAFEKNRFDELITAMNKAQLELIDMMRPGVRYPDLHLATHGKVAQMLLDFDLATGDAQGLVEQGITSAFFPHGLGHMLGLQVHDVGGFAFDERGTHIPAPEAHPFLRCTRILAPNQVLTMEPGLYIIDSLLNELKQNSRGKQINWNSVDELRPFGGIRIEDNVVVHQDRNENMTRELGLA</sequence>
<gene>
    <name evidence="1" type="primary">pepQ</name>
    <name type="ordered locus">SO_0022</name>
</gene>
<protein>
    <recommendedName>
        <fullName evidence="1">Xaa-Pro dipeptidase</fullName>
        <shortName evidence="1">X-Pro dipeptidase</shortName>
        <ecNumber evidence="1">3.4.13.9</ecNumber>
    </recommendedName>
    <alternativeName>
        <fullName evidence="1">Imidodipeptidase</fullName>
    </alternativeName>
    <alternativeName>
        <fullName evidence="1">Proline dipeptidase</fullName>
        <shortName evidence="1">Prolidase</shortName>
    </alternativeName>
</protein>